<reference key="1">
    <citation type="submission" date="2006-08" db="EMBL/GenBank/DDBJ databases">
        <title>Complete sequence of Shewanella sp. MR-4.</title>
        <authorList>
            <consortium name="US DOE Joint Genome Institute"/>
            <person name="Copeland A."/>
            <person name="Lucas S."/>
            <person name="Lapidus A."/>
            <person name="Barry K."/>
            <person name="Detter J.C."/>
            <person name="Glavina del Rio T."/>
            <person name="Hammon N."/>
            <person name="Israni S."/>
            <person name="Dalin E."/>
            <person name="Tice H."/>
            <person name="Pitluck S."/>
            <person name="Kiss H."/>
            <person name="Brettin T."/>
            <person name="Bruce D."/>
            <person name="Han C."/>
            <person name="Tapia R."/>
            <person name="Gilna P."/>
            <person name="Schmutz J."/>
            <person name="Larimer F."/>
            <person name="Land M."/>
            <person name="Hauser L."/>
            <person name="Kyrpides N."/>
            <person name="Mikhailova N."/>
            <person name="Nealson K."/>
            <person name="Konstantinidis K."/>
            <person name="Klappenbach J."/>
            <person name="Tiedje J."/>
            <person name="Richardson P."/>
        </authorList>
    </citation>
    <scope>NUCLEOTIDE SEQUENCE [LARGE SCALE GENOMIC DNA]</scope>
    <source>
        <strain>MR-4</strain>
    </source>
</reference>
<evidence type="ECO:0000255" key="1">
    <source>
        <dbReference type="HAMAP-Rule" id="MF_00791"/>
    </source>
</evidence>
<gene>
    <name evidence="1" type="primary">apaG</name>
    <name type="ordered locus">Shewmr4_0904</name>
</gene>
<name>APAG_SHESM</name>
<feature type="chain" id="PRO_1000083656" description="Protein ApaG">
    <location>
        <begin position="1"/>
        <end position="126"/>
    </location>
</feature>
<feature type="domain" description="ApaG" evidence="1">
    <location>
        <begin position="2"/>
        <end position="126"/>
    </location>
</feature>
<sequence>MSALDDSIRVEVKTEYIEQQSSPEDQKYLFSYTITIVNLGEQAAKLETRHWIITDANGKISEVQGAGVVGETPTIPPNTAYQYTSGTVLDTPLGIMYGTYGMVSESGERFKATIKPFRLALPGLLH</sequence>
<accession>Q0HLT3</accession>
<organism>
    <name type="scientific">Shewanella sp. (strain MR-4)</name>
    <dbReference type="NCBI Taxonomy" id="60480"/>
    <lineage>
        <taxon>Bacteria</taxon>
        <taxon>Pseudomonadati</taxon>
        <taxon>Pseudomonadota</taxon>
        <taxon>Gammaproteobacteria</taxon>
        <taxon>Alteromonadales</taxon>
        <taxon>Shewanellaceae</taxon>
        <taxon>Shewanella</taxon>
    </lineage>
</organism>
<dbReference type="EMBL" id="CP000446">
    <property type="protein sequence ID" value="ABI37984.1"/>
    <property type="molecule type" value="Genomic_DNA"/>
</dbReference>
<dbReference type="RefSeq" id="WP_011621699.1">
    <property type="nucleotide sequence ID" value="NC_008321.1"/>
</dbReference>
<dbReference type="SMR" id="Q0HLT3"/>
<dbReference type="KEGG" id="she:Shewmr4_0904"/>
<dbReference type="HOGENOM" id="CLU_128074_0_0_6"/>
<dbReference type="GO" id="GO:0070987">
    <property type="term" value="P:error-free translesion synthesis"/>
    <property type="evidence" value="ECO:0007669"/>
    <property type="project" value="TreeGrafter"/>
</dbReference>
<dbReference type="Gene3D" id="2.60.40.1470">
    <property type="entry name" value="ApaG domain"/>
    <property type="match status" value="1"/>
</dbReference>
<dbReference type="HAMAP" id="MF_00791">
    <property type="entry name" value="ApaG"/>
    <property type="match status" value="1"/>
</dbReference>
<dbReference type="InterPro" id="IPR007474">
    <property type="entry name" value="ApaG_domain"/>
</dbReference>
<dbReference type="InterPro" id="IPR036767">
    <property type="entry name" value="ApaG_sf"/>
</dbReference>
<dbReference type="InterPro" id="IPR023065">
    <property type="entry name" value="Uncharacterised_ApaG"/>
</dbReference>
<dbReference type="NCBIfam" id="NF003967">
    <property type="entry name" value="PRK05461.1"/>
    <property type="match status" value="1"/>
</dbReference>
<dbReference type="PANTHER" id="PTHR14289">
    <property type="entry name" value="F-BOX ONLY PROTEIN 3"/>
    <property type="match status" value="1"/>
</dbReference>
<dbReference type="PANTHER" id="PTHR14289:SF16">
    <property type="entry name" value="POLYMERASE DELTA-INTERACTING PROTEIN 2"/>
    <property type="match status" value="1"/>
</dbReference>
<dbReference type="Pfam" id="PF04379">
    <property type="entry name" value="DUF525"/>
    <property type="match status" value="1"/>
</dbReference>
<dbReference type="SUPFAM" id="SSF110069">
    <property type="entry name" value="ApaG-like"/>
    <property type="match status" value="1"/>
</dbReference>
<dbReference type="PROSITE" id="PS51087">
    <property type="entry name" value="APAG"/>
    <property type="match status" value="1"/>
</dbReference>
<protein>
    <recommendedName>
        <fullName evidence="1">Protein ApaG</fullName>
    </recommendedName>
</protein>
<proteinExistence type="inferred from homology"/>